<comment type="function">
    <text evidence="1">Catalyzes the attachment of alanine to tRNA(Ala) in a two-step reaction: alanine is first activated by ATP to form Ala-AMP and then transferred to the acceptor end of tRNA(Ala). Also edits incorrectly charged Ser-tRNA(Ala) and Gly-tRNA(Ala) via its editing domain.</text>
</comment>
<comment type="catalytic activity">
    <reaction evidence="1">
        <text>tRNA(Ala) + L-alanine + ATP = L-alanyl-tRNA(Ala) + AMP + diphosphate</text>
        <dbReference type="Rhea" id="RHEA:12540"/>
        <dbReference type="Rhea" id="RHEA-COMP:9657"/>
        <dbReference type="Rhea" id="RHEA-COMP:9923"/>
        <dbReference type="ChEBI" id="CHEBI:30616"/>
        <dbReference type="ChEBI" id="CHEBI:33019"/>
        <dbReference type="ChEBI" id="CHEBI:57972"/>
        <dbReference type="ChEBI" id="CHEBI:78442"/>
        <dbReference type="ChEBI" id="CHEBI:78497"/>
        <dbReference type="ChEBI" id="CHEBI:456215"/>
        <dbReference type="EC" id="6.1.1.7"/>
    </reaction>
</comment>
<comment type="cofactor">
    <cofactor evidence="1">
        <name>Zn(2+)</name>
        <dbReference type="ChEBI" id="CHEBI:29105"/>
    </cofactor>
    <text evidence="1">Binds 1 zinc ion per subunit.</text>
</comment>
<comment type="subcellular location">
    <subcellularLocation>
        <location evidence="1">Cytoplasm</location>
    </subcellularLocation>
</comment>
<comment type="domain">
    <text evidence="1">Consists of three domains; the N-terminal catalytic domain, the editing domain and the C-terminal C-Ala domain. The editing domain removes incorrectly charged amino acids, while the C-Ala domain, along with tRNA(Ala), serves as a bridge to cooperatively bring together the editing and aminoacylation centers thus stimulating deacylation of misacylated tRNAs.</text>
</comment>
<comment type="similarity">
    <text evidence="1">Belongs to the class-II aminoacyl-tRNA synthetase family.</text>
</comment>
<organism>
    <name type="scientific">Paraburkholderia phytofirmans (strain DSM 17436 / LMG 22146 / PsJN)</name>
    <name type="common">Burkholderia phytofirmans</name>
    <dbReference type="NCBI Taxonomy" id="398527"/>
    <lineage>
        <taxon>Bacteria</taxon>
        <taxon>Pseudomonadati</taxon>
        <taxon>Pseudomonadota</taxon>
        <taxon>Betaproteobacteria</taxon>
        <taxon>Burkholderiales</taxon>
        <taxon>Burkholderiaceae</taxon>
        <taxon>Paraburkholderia</taxon>
    </lineage>
</organism>
<gene>
    <name evidence="1" type="primary">alaS</name>
    <name type="ordered locus">Bphyt_2824</name>
</gene>
<accession>B2SZN0</accession>
<evidence type="ECO:0000255" key="1">
    <source>
        <dbReference type="HAMAP-Rule" id="MF_00036"/>
    </source>
</evidence>
<proteinExistence type="inferred from homology"/>
<reference key="1">
    <citation type="journal article" date="2011" name="J. Bacteriol.">
        <title>Complete genome sequence of the plant growth-promoting endophyte Burkholderia phytofirmans strain PsJN.</title>
        <authorList>
            <person name="Weilharter A."/>
            <person name="Mitter B."/>
            <person name="Shin M.V."/>
            <person name="Chain P.S."/>
            <person name="Nowak J."/>
            <person name="Sessitsch A."/>
        </authorList>
    </citation>
    <scope>NUCLEOTIDE SEQUENCE [LARGE SCALE GENOMIC DNA]</scope>
    <source>
        <strain>DSM 17436 / LMG 22146 / PsJN</strain>
    </source>
</reference>
<feature type="chain" id="PRO_0000347529" description="Alanine--tRNA ligase">
    <location>
        <begin position="1"/>
        <end position="874"/>
    </location>
</feature>
<feature type="binding site" evidence="1">
    <location>
        <position position="564"/>
    </location>
    <ligand>
        <name>Zn(2+)</name>
        <dbReference type="ChEBI" id="CHEBI:29105"/>
    </ligand>
</feature>
<feature type="binding site" evidence="1">
    <location>
        <position position="568"/>
    </location>
    <ligand>
        <name>Zn(2+)</name>
        <dbReference type="ChEBI" id="CHEBI:29105"/>
    </ligand>
</feature>
<feature type="binding site" evidence="1">
    <location>
        <position position="665"/>
    </location>
    <ligand>
        <name>Zn(2+)</name>
        <dbReference type="ChEBI" id="CHEBI:29105"/>
    </ligand>
</feature>
<feature type="binding site" evidence="1">
    <location>
        <position position="669"/>
    </location>
    <ligand>
        <name>Zn(2+)</name>
        <dbReference type="ChEBI" id="CHEBI:29105"/>
    </ligand>
</feature>
<protein>
    <recommendedName>
        <fullName evidence="1">Alanine--tRNA ligase</fullName>
        <ecNumber evidence="1">6.1.1.7</ecNumber>
    </recommendedName>
    <alternativeName>
        <fullName evidence="1">Alanyl-tRNA synthetase</fullName>
        <shortName evidence="1">AlaRS</shortName>
    </alternativeName>
</protein>
<sequence>MKAAEIREKFLKFFESKGHTIVRSSSLVPGNDPTLLFTNSGMVQFKDVFLGAESRPYSRATTAQRSVRAGGKHNDLENVGYTARHHTFFEMLGNFSFGDYFKRDAIHYAWELLTGVYQLPKDKLWVTVYHEDDEAHDIWAKEVGVPVERIIRIGDNKGARYASDNFWQMADVGPCGPCSEIFYDHGPDVWGGPPGSPEEDGDRYIEIWNLVFMQFSRDAQGNMTPLPKQCVDTGMGLERIAAVLQHVHSNYEIDLFQALIKAAGRETGVSDLTNNSLKVIADHIRACSFLIVDGVIPGNEGRGYVLRRIVRRAIRHGYKLGKKGSFFHRMVADLVAQMGDAYPELKEAEQRVTDVLRQEEERFFETIEHGMSILESALADLEAKGGKTLDGELAFKLHDTYGFPLDLTADVCREREVTVDEAAFDEAMARQREQARAAGKFKMAQGLEYSGAKTTFHGYEEIVFDDAKVIALYVDGASVKEVRDGRQAVVVLDHTPFYAESGGQVGDQGVLANASVRFAVSDTLKVQADVVGHHGTLEQGTLKVGDVVKAEIDAVRRARTARNHSATHLMHKALREVLGSHVQQKGSLVDADKTRFDFAHNAPMTDEQIRRVEEIVNAEVLANAPGIVRVMPFDEAVKGGAMALFGEKYGDEVRVLDLGFSRELCGGTHVHRTGDIGLFKIVMEGGVAAGIRRVEAITGDNAVRFVQDLDARINAAAAVLKAQPSELTQRITQVQDQVKSLEKELSALKSKMASSQGDELAGQAIEVGGVHVLAATLEGADVKTLRETVDKLKDKLKSAAIVLASVEGGKVSLIAGVTADASKKVKAGELVNFVAQQVGGKGGGRPDMAQAGGTEPANLPAALAGVKGWVEGQL</sequence>
<keyword id="KW-0030">Aminoacyl-tRNA synthetase</keyword>
<keyword id="KW-0067">ATP-binding</keyword>
<keyword id="KW-0963">Cytoplasm</keyword>
<keyword id="KW-0436">Ligase</keyword>
<keyword id="KW-0479">Metal-binding</keyword>
<keyword id="KW-0547">Nucleotide-binding</keyword>
<keyword id="KW-0648">Protein biosynthesis</keyword>
<keyword id="KW-0694">RNA-binding</keyword>
<keyword id="KW-0820">tRNA-binding</keyword>
<keyword id="KW-0862">Zinc</keyword>
<dbReference type="EC" id="6.1.1.7" evidence="1"/>
<dbReference type="EMBL" id="CP001052">
    <property type="protein sequence ID" value="ACD17218.1"/>
    <property type="molecule type" value="Genomic_DNA"/>
</dbReference>
<dbReference type="RefSeq" id="WP_012433806.1">
    <property type="nucleotide sequence ID" value="NC_010681.1"/>
</dbReference>
<dbReference type="SMR" id="B2SZN0"/>
<dbReference type="STRING" id="398527.Bphyt_2824"/>
<dbReference type="KEGG" id="bpy:Bphyt_2824"/>
<dbReference type="eggNOG" id="COG0013">
    <property type="taxonomic scope" value="Bacteria"/>
</dbReference>
<dbReference type="HOGENOM" id="CLU_004485_1_1_4"/>
<dbReference type="OrthoDB" id="9803884at2"/>
<dbReference type="Proteomes" id="UP000001739">
    <property type="component" value="Chromosome 1"/>
</dbReference>
<dbReference type="GO" id="GO:0005829">
    <property type="term" value="C:cytosol"/>
    <property type="evidence" value="ECO:0007669"/>
    <property type="project" value="TreeGrafter"/>
</dbReference>
<dbReference type="GO" id="GO:0004813">
    <property type="term" value="F:alanine-tRNA ligase activity"/>
    <property type="evidence" value="ECO:0007669"/>
    <property type="project" value="UniProtKB-UniRule"/>
</dbReference>
<dbReference type="GO" id="GO:0002161">
    <property type="term" value="F:aminoacyl-tRNA deacylase activity"/>
    <property type="evidence" value="ECO:0007669"/>
    <property type="project" value="TreeGrafter"/>
</dbReference>
<dbReference type="GO" id="GO:0005524">
    <property type="term" value="F:ATP binding"/>
    <property type="evidence" value="ECO:0007669"/>
    <property type="project" value="UniProtKB-UniRule"/>
</dbReference>
<dbReference type="GO" id="GO:0000049">
    <property type="term" value="F:tRNA binding"/>
    <property type="evidence" value="ECO:0007669"/>
    <property type="project" value="UniProtKB-KW"/>
</dbReference>
<dbReference type="GO" id="GO:0008270">
    <property type="term" value="F:zinc ion binding"/>
    <property type="evidence" value="ECO:0007669"/>
    <property type="project" value="UniProtKB-UniRule"/>
</dbReference>
<dbReference type="GO" id="GO:0006419">
    <property type="term" value="P:alanyl-tRNA aminoacylation"/>
    <property type="evidence" value="ECO:0007669"/>
    <property type="project" value="UniProtKB-UniRule"/>
</dbReference>
<dbReference type="GO" id="GO:0045892">
    <property type="term" value="P:negative regulation of DNA-templated transcription"/>
    <property type="evidence" value="ECO:0007669"/>
    <property type="project" value="TreeGrafter"/>
</dbReference>
<dbReference type="CDD" id="cd00673">
    <property type="entry name" value="AlaRS_core"/>
    <property type="match status" value="1"/>
</dbReference>
<dbReference type="FunFam" id="2.40.30.130:FF:000001">
    <property type="entry name" value="Alanine--tRNA ligase"/>
    <property type="match status" value="1"/>
</dbReference>
<dbReference type="FunFam" id="3.10.310.40:FF:000001">
    <property type="entry name" value="Alanine--tRNA ligase"/>
    <property type="match status" value="1"/>
</dbReference>
<dbReference type="FunFam" id="3.30.54.20:FF:000001">
    <property type="entry name" value="Alanine--tRNA ligase"/>
    <property type="match status" value="1"/>
</dbReference>
<dbReference type="FunFam" id="3.30.930.10:FF:000004">
    <property type="entry name" value="Alanine--tRNA ligase"/>
    <property type="match status" value="1"/>
</dbReference>
<dbReference type="FunFam" id="3.30.980.10:FF:000004">
    <property type="entry name" value="Alanine--tRNA ligase, cytoplasmic"/>
    <property type="match status" value="1"/>
</dbReference>
<dbReference type="Gene3D" id="2.40.30.130">
    <property type="match status" value="1"/>
</dbReference>
<dbReference type="Gene3D" id="3.10.310.40">
    <property type="match status" value="1"/>
</dbReference>
<dbReference type="Gene3D" id="3.30.54.20">
    <property type="match status" value="1"/>
</dbReference>
<dbReference type="Gene3D" id="6.10.250.550">
    <property type="match status" value="1"/>
</dbReference>
<dbReference type="Gene3D" id="3.30.930.10">
    <property type="entry name" value="Bira Bifunctional Protein, Domain 2"/>
    <property type="match status" value="1"/>
</dbReference>
<dbReference type="Gene3D" id="3.30.980.10">
    <property type="entry name" value="Threonyl-trna Synthetase, Chain A, domain 2"/>
    <property type="match status" value="1"/>
</dbReference>
<dbReference type="HAMAP" id="MF_00036_B">
    <property type="entry name" value="Ala_tRNA_synth_B"/>
    <property type="match status" value="1"/>
</dbReference>
<dbReference type="InterPro" id="IPR045864">
    <property type="entry name" value="aa-tRNA-synth_II/BPL/LPL"/>
</dbReference>
<dbReference type="InterPro" id="IPR002318">
    <property type="entry name" value="Ala-tRNA-lgiase_IIc"/>
</dbReference>
<dbReference type="InterPro" id="IPR018162">
    <property type="entry name" value="Ala-tRNA-ligase_IIc_anticod-bd"/>
</dbReference>
<dbReference type="InterPro" id="IPR018165">
    <property type="entry name" value="Ala-tRNA-synth_IIc_core"/>
</dbReference>
<dbReference type="InterPro" id="IPR018164">
    <property type="entry name" value="Ala-tRNA-synth_IIc_N"/>
</dbReference>
<dbReference type="InterPro" id="IPR050058">
    <property type="entry name" value="Ala-tRNA_ligase"/>
</dbReference>
<dbReference type="InterPro" id="IPR023033">
    <property type="entry name" value="Ala_tRNA_ligase_euk/bac"/>
</dbReference>
<dbReference type="InterPro" id="IPR003156">
    <property type="entry name" value="DHHA1_dom"/>
</dbReference>
<dbReference type="InterPro" id="IPR018163">
    <property type="entry name" value="Thr/Ala-tRNA-synth_IIc_edit"/>
</dbReference>
<dbReference type="InterPro" id="IPR009000">
    <property type="entry name" value="Transl_B-barrel_sf"/>
</dbReference>
<dbReference type="InterPro" id="IPR012947">
    <property type="entry name" value="tRNA_SAD"/>
</dbReference>
<dbReference type="NCBIfam" id="TIGR00344">
    <property type="entry name" value="alaS"/>
    <property type="match status" value="1"/>
</dbReference>
<dbReference type="PANTHER" id="PTHR11777:SF9">
    <property type="entry name" value="ALANINE--TRNA LIGASE, CYTOPLASMIC"/>
    <property type="match status" value="1"/>
</dbReference>
<dbReference type="PANTHER" id="PTHR11777">
    <property type="entry name" value="ALANYL-TRNA SYNTHETASE"/>
    <property type="match status" value="1"/>
</dbReference>
<dbReference type="Pfam" id="PF02272">
    <property type="entry name" value="DHHA1"/>
    <property type="match status" value="1"/>
</dbReference>
<dbReference type="Pfam" id="PF01411">
    <property type="entry name" value="tRNA-synt_2c"/>
    <property type="match status" value="1"/>
</dbReference>
<dbReference type="Pfam" id="PF07973">
    <property type="entry name" value="tRNA_SAD"/>
    <property type="match status" value="1"/>
</dbReference>
<dbReference type="PRINTS" id="PR00980">
    <property type="entry name" value="TRNASYNTHALA"/>
</dbReference>
<dbReference type="SMART" id="SM00863">
    <property type="entry name" value="tRNA_SAD"/>
    <property type="match status" value="1"/>
</dbReference>
<dbReference type="SUPFAM" id="SSF55681">
    <property type="entry name" value="Class II aaRS and biotin synthetases"/>
    <property type="match status" value="1"/>
</dbReference>
<dbReference type="SUPFAM" id="SSF101353">
    <property type="entry name" value="Putative anticodon-binding domain of alanyl-tRNA synthetase (AlaRS)"/>
    <property type="match status" value="1"/>
</dbReference>
<dbReference type="SUPFAM" id="SSF55186">
    <property type="entry name" value="ThrRS/AlaRS common domain"/>
    <property type="match status" value="1"/>
</dbReference>
<dbReference type="SUPFAM" id="SSF50447">
    <property type="entry name" value="Translation proteins"/>
    <property type="match status" value="1"/>
</dbReference>
<dbReference type="PROSITE" id="PS50860">
    <property type="entry name" value="AA_TRNA_LIGASE_II_ALA"/>
    <property type="match status" value="1"/>
</dbReference>
<name>SYA_PARPJ</name>